<protein>
    <recommendedName>
        <fullName evidence="5">Isocitrate lyase</fullName>
        <shortName evidence="6">ICL</shortName>
        <shortName evidence="6">Isocitrase</shortName>
        <shortName evidence="6">Isocitratase</shortName>
        <ecNumber evidence="1">4.1.3.1</ecNumber>
    </recommendedName>
    <alternativeName>
        <fullName evidence="1">Methylisocitrate lyase</fullName>
        <shortName evidence="6">MICA</shortName>
        <ecNumber evidence="1">4.1.3.30</ecNumber>
    </alternativeName>
    <alternativeName>
        <fullName evidence="6">Threo-D(S)-isocitrate glyoxylate-lyase</fullName>
    </alternativeName>
</protein>
<comment type="function">
    <text evidence="1 4">Catalyzes the formation of succinate and glyoxylate from isocitrate, a key step of the glyoxylate cycle, which operates as an anaplerotic route for replenishing the tricarboxylic acid cycle. Required for growth on ethanol or acetate, but dispensable when fermentable carbon sources are available. Also acts on 2-methylisocitrate (By similarity). Plays an important role in plant pathogenicity.</text>
</comment>
<comment type="catalytic activity">
    <reaction evidence="1">
        <text>D-threo-isocitrate = glyoxylate + succinate</text>
        <dbReference type="Rhea" id="RHEA:13245"/>
        <dbReference type="ChEBI" id="CHEBI:15562"/>
        <dbReference type="ChEBI" id="CHEBI:30031"/>
        <dbReference type="ChEBI" id="CHEBI:36655"/>
        <dbReference type="EC" id="4.1.3.1"/>
    </reaction>
</comment>
<comment type="catalytic activity">
    <reaction evidence="1">
        <text>(2S,3R)-3-hydroxybutane-1,2,3-tricarboxylate = pyruvate + succinate</text>
        <dbReference type="Rhea" id="RHEA:16809"/>
        <dbReference type="ChEBI" id="CHEBI:15361"/>
        <dbReference type="ChEBI" id="CHEBI:30031"/>
        <dbReference type="ChEBI" id="CHEBI:57429"/>
        <dbReference type="EC" id="4.1.3.30"/>
    </reaction>
</comment>
<comment type="cofactor">
    <cofactor evidence="3">
        <name>Mg(2+)</name>
        <dbReference type="ChEBI" id="CHEBI:18420"/>
    </cofactor>
</comment>
<comment type="pathway">
    <text>Carbohydrate metabolism; glyoxylate cycle; (S)-malate from isocitrate: step 1/2.</text>
</comment>
<comment type="subunit">
    <text evidence="1">Homotetramer.</text>
</comment>
<comment type="subcellular location">
    <subcellularLocation>
        <location evidence="2">Glyoxysome</location>
    </subcellularLocation>
</comment>
<comment type="disruption phenotype">
    <text evidence="4">Leads to reduced virulence and a delay in the expression of rice blast symptoms.</text>
</comment>
<comment type="similarity">
    <text evidence="6">Belongs to the isocitrate lyase/PEP mutase superfamily. Isocitrate lyase family.</text>
</comment>
<sequence length="547" mass="61001">MASKNMVNPAVEPSMEDDLFAREVAEVKQWWSDPRWRYTKRPFTAEQIVSKRGNLKIEYPSNAQSKKLWKILEGRFQKRDASYTYGCLEPTMVTQMAKYLDTVYVSGWQSSSTASSSDEPGPDLADYPYTTVPNKVSHLFMAQLFHDRKQRHERLSAPKSERSKLQNIDYLRPIIADADTGHGGLTAVMKLTKLFIEKGAAGIHIEDQAPGTKKCGHMAGKVLVPISEHINRLVAIRAQADIMGVDLLAIARTDAEAATLITTSIDPRDHAFILGCTNPSLQPLADLMNTAEQSGKTGDQLQAIEDEWMAKANLKRFDDAVVDVINSSSSIRNPKDVAAKYLQAAKGKSNREARAIASSLGVPEIFFDWDSPRTREGYFRIKGGCDCAINRAIAYAPYADAIWMESKLPDYEQAKEFAEGVHAVYPEQKLAYNLSPSFNWKTAMPRDEQETYIRRLAGLGYCWQFITLAGLHTTALISDRFARAYSEVGMRAYGELVQEPEMELGVDVVKHQKWSGATYVDELQKMVTGGVSSTAAMGKGVTEDQFH</sequence>
<feature type="chain" id="PRO_0000068793" description="Isocitrate lyase">
    <location>
        <begin position="1"/>
        <end position="547"/>
    </location>
</feature>
<feature type="active site" description="Proton acceptor" evidence="3">
    <location>
        <position position="215"/>
    </location>
</feature>
<feature type="binding site" evidence="3">
    <location>
        <begin position="106"/>
        <end position="108"/>
    </location>
    <ligand>
        <name>substrate</name>
    </ligand>
</feature>
<feature type="binding site" evidence="3">
    <location>
        <position position="177"/>
    </location>
    <ligand>
        <name>Mg(2+)</name>
        <dbReference type="ChEBI" id="CHEBI:18420"/>
    </ligand>
</feature>
<feature type="binding site" evidence="3">
    <location>
        <begin position="216"/>
        <end position="217"/>
    </location>
    <ligand>
        <name>substrate</name>
    </ligand>
</feature>
<feature type="binding site" evidence="3">
    <location>
        <position position="252"/>
    </location>
    <ligand>
        <name>substrate</name>
    </ligand>
</feature>
<feature type="binding site" evidence="3">
    <location>
        <begin position="433"/>
        <end position="437"/>
    </location>
    <ligand>
        <name>substrate</name>
    </ligand>
</feature>
<feature type="binding site" evidence="3">
    <location>
        <position position="467"/>
    </location>
    <ligand>
        <name>substrate</name>
    </ligand>
</feature>
<feature type="turn" evidence="7">
    <location>
        <begin position="13"/>
        <end position="15"/>
    </location>
</feature>
<feature type="helix" evidence="7">
    <location>
        <begin position="16"/>
        <end position="31"/>
    </location>
</feature>
<feature type="helix" evidence="7">
    <location>
        <begin position="34"/>
        <end position="36"/>
    </location>
</feature>
<feature type="helix" evidence="7">
    <location>
        <begin position="45"/>
        <end position="49"/>
    </location>
</feature>
<feature type="helix" evidence="7">
    <location>
        <begin position="60"/>
        <end position="78"/>
    </location>
</feature>
<feature type="strand" evidence="7">
    <location>
        <begin position="82"/>
        <end position="86"/>
    </location>
</feature>
<feature type="helix" evidence="7">
    <location>
        <begin position="90"/>
        <end position="96"/>
    </location>
</feature>
<feature type="turn" evidence="7">
    <location>
        <begin position="97"/>
        <end position="99"/>
    </location>
</feature>
<feature type="strand" evidence="7">
    <location>
        <begin position="103"/>
        <end position="105"/>
    </location>
</feature>
<feature type="helix" evidence="7">
    <location>
        <begin position="107"/>
        <end position="113"/>
    </location>
</feature>
<feature type="strand" evidence="7">
    <location>
        <begin position="122"/>
        <end position="125"/>
    </location>
</feature>
<feature type="helix" evidence="7">
    <location>
        <begin position="131"/>
        <end position="156"/>
    </location>
</feature>
<feature type="helix" evidence="7">
    <location>
        <begin position="159"/>
        <end position="164"/>
    </location>
</feature>
<feature type="strand" evidence="7">
    <location>
        <begin position="174"/>
        <end position="177"/>
    </location>
</feature>
<feature type="strand" evidence="7">
    <location>
        <begin position="182"/>
        <end position="184"/>
    </location>
</feature>
<feature type="helix" evidence="7">
    <location>
        <begin position="185"/>
        <end position="198"/>
    </location>
</feature>
<feature type="strand" evidence="7">
    <location>
        <begin position="201"/>
        <end position="208"/>
    </location>
</feature>
<feature type="turn" evidence="7">
    <location>
        <begin position="210"/>
        <end position="212"/>
    </location>
</feature>
<feature type="strand" evidence="7">
    <location>
        <begin position="218"/>
        <end position="220"/>
    </location>
</feature>
<feature type="helix" evidence="7">
    <location>
        <begin position="226"/>
        <end position="243"/>
    </location>
</feature>
<feature type="strand" evidence="7">
    <location>
        <begin position="248"/>
        <end position="253"/>
    </location>
</feature>
<feature type="turn" evidence="7">
    <location>
        <begin position="255"/>
        <end position="257"/>
    </location>
</feature>
<feature type="strand" evidence="7">
    <location>
        <begin position="260"/>
        <end position="262"/>
    </location>
</feature>
<feature type="helix" evidence="7">
    <location>
        <begin position="267"/>
        <end position="269"/>
    </location>
</feature>
<feature type="turn" evidence="7">
    <location>
        <begin position="270"/>
        <end position="272"/>
    </location>
</feature>
<feature type="helix" evidence="7">
    <location>
        <begin position="284"/>
        <end position="292"/>
    </location>
</feature>
<feature type="helix" evidence="7">
    <location>
        <begin position="299"/>
        <end position="312"/>
    </location>
</feature>
<feature type="helix" evidence="7">
    <location>
        <begin position="317"/>
        <end position="325"/>
    </location>
</feature>
<feature type="helix" evidence="7">
    <location>
        <begin position="334"/>
        <end position="345"/>
    </location>
</feature>
<feature type="helix" evidence="7">
    <location>
        <begin position="350"/>
        <end position="359"/>
    </location>
</feature>
<feature type="strand" evidence="7">
    <location>
        <begin position="368"/>
        <end position="370"/>
    </location>
</feature>
<feature type="strand" evidence="7">
    <location>
        <begin position="379"/>
        <end position="381"/>
    </location>
</feature>
<feature type="helix" evidence="7">
    <location>
        <begin position="385"/>
        <end position="395"/>
    </location>
</feature>
<feature type="helix" evidence="7">
    <location>
        <begin position="396"/>
        <end position="398"/>
    </location>
</feature>
<feature type="strand" evidence="7">
    <location>
        <begin position="400"/>
        <end position="404"/>
    </location>
</feature>
<feature type="helix" evidence="7">
    <location>
        <begin position="411"/>
        <end position="422"/>
    </location>
</feature>
<feature type="strand" evidence="7">
    <location>
        <begin position="430"/>
        <end position="433"/>
    </location>
</feature>
<feature type="helix" evidence="7">
    <location>
        <begin position="440"/>
        <end position="443"/>
    </location>
</feature>
<feature type="helix" evidence="7">
    <location>
        <begin position="446"/>
        <end position="458"/>
    </location>
</feature>
<feature type="strand" evidence="7">
    <location>
        <begin position="461"/>
        <end position="466"/>
    </location>
</feature>
<feature type="helix" evidence="7">
    <location>
        <begin position="469"/>
        <end position="488"/>
    </location>
</feature>
<feature type="helix" evidence="7">
    <location>
        <begin position="490"/>
        <end position="496"/>
    </location>
</feature>
<feature type="helix" evidence="7">
    <location>
        <begin position="498"/>
        <end position="504"/>
    </location>
</feature>
<feature type="helix" evidence="7">
    <location>
        <begin position="507"/>
        <end position="509"/>
    </location>
</feature>
<feature type="helix" evidence="7">
    <location>
        <begin position="511"/>
        <end position="514"/>
    </location>
</feature>
<feature type="helix" evidence="7">
    <location>
        <begin position="517"/>
        <end position="526"/>
    </location>
</feature>
<gene>
    <name evidence="5" type="primary">ICL1</name>
    <name type="ORF">MGG_04895</name>
</gene>
<reference key="1">
    <citation type="journal article" date="2003" name="Mol. Microbiol.">
        <title>The glyoxylate cycle is required for temporal regulation of virulence by the plant pathogenic fungus Magnaporthe grisea.</title>
        <authorList>
            <person name="Wang Z.Y."/>
            <person name="Thornton C.R."/>
            <person name="Kershaw M.J."/>
            <person name="Debao L."/>
            <person name="Talbot N.J."/>
        </authorList>
    </citation>
    <scope>NUCLEOTIDE SEQUENCE [GENOMIC DNA]</scope>
    <scope>DISRUPTION PHENOTYPE</scope>
    <scope>FUNCTION</scope>
    <source>
        <strain>Guyane 11</strain>
    </source>
</reference>
<reference key="2">
    <citation type="journal article" date="2005" name="Nature">
        <title>The genome sequence of the rice blast fungus Magnaporthe grisea.</title>
        <authorList>
            <person name="Dean R.A."/>
            <person name="Talbot N.J."/>
            <person name="Ebbole D.J."/>
            <person name="Farman M.L."/>
            <person name="Mitchell T.K."/>
            <person name="Orbach M.J."/>
            <person name="Thon M.R."/>
            <person name="Kulkarni R."/>
            <person name="Xu J.-R."/>
            <person name="Pan H."/>
            <person name="Read N.D."/>
            <person name="Lee Y.-H."/>
            <person name="Carbone I."/>
            <person name="Brown D."/>
            <person name="Oh Y.Y."/>
            <person name="Donofrio N."/>
            <person name="Jeong J.S."/>
            <person name="Soanes D.M."/>
            <person name="Djonovic S."/>
            <person name="Kolomiets E."/>
            <person name="Rehmeyer C."/>
            <person name="Li W."/>
            <person name="Harding M."/>
            <person name="Kim S."/>
            <person name="Lebrun M.-H."/>
            <person name="Bohnert H."/>
            <person name="Coughlan S."/>
            <person name="Butler J."/>
            <person name="Calvo S.E."/>
            <person name="Ma L.-J."/>
            <person name="Nicol R."/>
            <person name="Purcell S."/>
            <person name="Nusbaum C."/>
            <person name="Galagan J.E."/>
            <person name="Birren B.W."/>
        </authorList>
    </citation>
    <scope>NUCLEOTIDE SEQUENCE [LARGE SCALE GENOMIC DNA]</scope>
    <source>
        <strain>70-15 / ATCC MYA-4617 / FGSC 8958</strain>
    </source>
</reference>
<proteinExistence type="evidence at protein level"/>
<name>ACEA_PYRO7</name>
<keyword id="KW-0002">3D-structure</keyword>
<keyword id="KW-0329">Glyoxylate bypass</keyword>
<keyword id="KW-0330">Glyoxysome</keyword>
<keyword id="KW-0456">Lyase</keyword>
<keyword id="KW-0460">Magnesium</keyword>
<keyword id="KW-0479">Metal-binding</keyword>
<keyword id="KW-0576">Peroxisome</keyword>
<keyword id="KW-1185">Reference proteome</keyword>
<keyword id="KW-0816">Tricarboxylic acid cycle</keyword>
<dbReference type="EC" id="4.1.3.1" evidence="1"/>
<dbReference type="EC" id="4.1.3.30" evidence="1"/>
<dbReference type="EMBL" id="AF540383">
    <property type="protein sequence ID" value="AAN28719.1"/>
    <property type="molecule type" value="Genomic_DNA"/>
</dbReference>
<dbReference type="EMBL" id="CM001233">
    <property type="protein sequence ID" value="EHA52574.1"/>
    <property type="molecule type" value="Genomic_DNA"/>
</dbReference>
<dbReference type="RefSeq" id="XP_003712381.1">
    <property type="nucleotide sequence ID" value="XM_003712333.1"/>
</dbReference>
<dbReference type="PDB" id="5E9F">
    <property type="method" value="X-ray"/>
    <property type="resolution" value="2.80 A"/>
    <property type="chains" value="A/B/C/D=1-547"/>
</dbReference>
<dbReference type="PDB" id="5E9G">
    <property type="method" value="X-ray"/>
    <property type="resolution" value="2.10 A"/>
    <property type="chains" value="A/B/C/D=1-547"/>
</dbReference>
<dbReference type="PDBsum" id="5E9F"/>
<dbReference type="PDBsum" id="5E9G"/>
<dbReference type="SMR" id="P0CT06"/>
<dbReference type="FunCoup" id="P0CT06">
    <property type="interactions" value="163"/>
</dbReference>
<dbReference type="STRING" id="242507.P0CT06"/>
<dbReference type="BindingDB" id="P0CT06"/>
<dbReference type="ChEMBL" id="CHEMBL1075264"/>
<dbReference type="EnsemblFungi" id="MGG_04895T0">
    <property type="protein sequence ID" value="MGG_04895T0"/>
    <property type="gene ID" value="MGG_04895"/>
</dbReference>
<dbReference type="GeneID" id="2675603"/>
<dbReference type="KEGG" id="mgr:MGG_04895"/>
<dbReference type="VEuPathDB" id="FungiDB:MGG_04895"/>
<dbReference type="eggNOG" id="KOG1260">
    <property type="taxonomic scope" value="Eukaryota"/>
</dbReference>
<dbReference type="HOGENOM" id="CLU_019214_2_2_1"/>
<dbReference type="InParanoid" id="P0CT06"/>
<dbReference type="OMA" id="YVSGWQV"/>
<dbReference type="OrthoDB" id="4078635at2759"/>
<dbReference type="BRENDA" id="4.1.3.1">
    <property type="organism ID" value="5238"/>
</dbReference>
<dbReference type="UniPathway" id="UPA00703">
    <property type="reaction ID" value="UER00719"/>
</dbReference>
<dbReference type="PHI-base" id="PHI:305"/>
<dbReference type="PRO" id="PR:P0CT06"/>
<dbReference type="Proteomes" id="UP000009058">
    <property type="component" value="Chromosome 3"/>
</dbReference>
<dbReference type="GO" id="GO:0009514">
    <property type="term" value="C:glyoxysome"/>
    <property type="evidence" value="ECO:0007669"/>
    <property type="project" value="UniProtKB-SubCell"/>
</dbReference>
<dbReference type="GO" id="GO:0004451">
    <property type="term" value="F:isocitrate lyase activity"/>
    <property type="evidence" value="ECO:0007669"/>
    <property type="project" value="UniProtKB-EC"/>
</dbReference>
<dbReference type="GO" id="GO:0046872">
    <property type="term" value="F:metal ion binding"/>
    <property type="evidence" value="ECO:0007669"/>
    <property type="project" value="UniProtKB-KW"/>
</dbReference>
<dbReference type="GO" id="GO:0046421">
    <property type="term" value="F:methylisocitrate lyase activity"/>
    <property type="evidence" value="ECO:0007669"/>
    <property type="project" value="UniProtKB-EC"/>
</dbReference>
<dbReference type="GO" id="GO:0006097">
    <property type="term" value="P:glyoxylate cycle"/>
    <property type="evidence" value="ECO:0007669"/>
    <property type="project" value="UniProtKB-UniPathway"/>
</dbReference>
<dbReference type="GO" id="GO:0006099">
    <property type="term" value="P:tricarboxylic acid cycle"/>
    <property type="evidence" value="ECO:0007669"/>
    <property type="project" value="UniProtKB-KW"/>
</dbReference>
<dbReference type="FunFam" id="1.10.10.850:FF:000001">
    <property type="entry name" value="Isocitrate lyase"/>
    <property type="match status" value="1"/>
</dbReference>
<dbReference type="Gene3D" id="1.10.10.850">
    <property type="match status" value="1"/>
</dbReference>
<dbReference type="Gene3D" id="3.20.20.60">
    <property type="entry name" value="Phosphoenolpyruvate-binding domains"/>
    <property type="match status" value="1"/>
</dbReference>
<dbReference type="InterPro" id="IPR006254">
    <property type="entry name" value="Isocitrate_lyase"/>
</dbReference>
<dbReference type="InterPro" id="IPR018523">
    <property type="entry name" value="Isocitrate_lyase_ph_CS"/>
</dbReference>
<dbReference type="InterPro" id="IPR015813">
    <property type="entry name" value="Pyrv/PenolPyrv_kinase-like_dom"/>
</dbReference>
<dbReference type="InterPro" id="IPR040442">
    <property type="entry name" value="Pyrv_kinase-like_dom_sf"/>
</dbReference>
<dbReference type="NCBIfam" id="TIGR01346">
    <property type="entry name" value="isocit_lyase"/>
    <property type="match status" value="1"/>
</dbReference>
<dbReference type="PANTHER" id="PTHR21631:SF3">
    <property type="entry name" value="BIFUNCTIONAL GLYOXYLATE CYCLE PROTEIN"/>
    <property type="match status" value="1"/>
</dbReference>
<dbReference type="PANTHER" id="PTHR21631">
    <property type="entry name" value="ISOCITRATE LYASE/MALATE SYNTHASE"/>
    <property type="match status" value="1"/>
</dbReference>
<dbReference type="Pfam" id="PF00463">
    <property type="entry name" value="ICL"/>
    <property type="match status" value="1"/>
</dbReference>
<dbReference type="PIRSF" id="PIRSF001362">
    <property type="entry name" value="Isocit_lyase"/>
    <property type="match status" value="1"/>
</dbReference>
<dbReference type="SUPFAM" id="SSF51621">
    <property type="entry name" value="Phosphoenolpyruvate/pyruvate domain"/>
    <property type="match status" value="1"/>
</dbReference>
<dbReference type="PROSITE" id="PS00161">
    <property type="entry name" value="ISOCITRATE_LYASE"/>
    <property type="match status" value="1"/>
</dbReference>
<evidence type="ECO:0000250" key="1">
    <source>
        <dbReference type="UniProtKB" id="P28240"/>
    </source>
</evidence>
<evidence type="ECO:0000250" key="2">
    <source>
        <dbReference type="UniProtKB" id="P28299"/>
    </source>
</evidence>
<evidence type="ECO:0000250" key="3">
    <source>
        <dbReference type="UniProtKB" id="P9WKK7"/>
    </source>
</evidence>
<evidence type="ECO:0000269" key="4">
    <source>
    </source>
</evidence>
<evidence type="ECO:0000303" key="5">
    <source>
    </source>
</evidence>
<evidence type="ECO:0000305" key="6"/>
<evidence type="ECO:0007829" key="7">
    <source>
        <dbReference type="PDB" id="5E9G"/>
    </source>
</evidence>
<accession>P0CT06</accession>
<accession>A4QU17</accession>
<accession>G4N2R9</accession>
<accession>Q5EN15</accession>
<accession>Q8J232</accession>
<organism>
    <name type="scientific">Pyricularia oryzae (strain 70-15 / ATCC MYA-4617 / FGSC 8958)</name>
    <name type="common">Rice blast fungus</name>
    <name type="synonym">Magnaporthe oryzae</name>
    <dbReference type="NCBI Taxonomy" id="242507"/>
    <lineage>
        <taxon>Eukaryota</taxon>
        <taxon>Fungi</taxon>
        <taxon>Dikarya</taxon>
        <taxon>Ascomycota</taxon>
        <taxon>Pezizomycotina</taxon>
        <taxon>Sordariomycetes</taxon>
        <taxon>Sordariomycetidae</taxon>
        <taxon>Magnaporthales</taxon>
        <taxon>Pyriculariaceae</taxon>
        <taxon>Pyricularia</taxon>
    </lineage>
</organism>